<proteinExistence type="uncertain"/>
<feature type="chain" id="PRO_0000202675" description="Putative uncharacterized protein YFL032W">
    <location>
        <begin position="1"/>
        <end position="106"/>
    </location>
</feature>
<feature type="transmembrane region" description="Helical" evidence="1">
    <location>
        <begin position="25"/>
        <end position="45"/>
    </location>
</feature>
<feature type="transmembrane region" description="Helical" evidence="1">
    <location>
        <begin position="62"/>
        <end position="82"/>
    </location>
</feature>
<organism>
    <name type="scientific">Saccharomyces cerevisiae (strain ATCC 204508 / S288c)</name>
    <name type="common">Baker's yeast</name>
    <dbReference type="NCBI Taxonomy" id="559292"/>
    <lineage>
        <taxon>Eukaryota</taxon>
        <taxon>Fungi</taxon>
        <taxon>Dikarya</taxon>
        <taxon>Ascomycota</taxon>
        <taxon>Saccharomycotina</taxon>
        <taxon>Saccharomycetes</taxon>
        <taxon>Saccharomycetales</taxon>
        <taxon>Saccharomycetaceae</taxon>
        <taxon>Saccharomyces</taxon>
    </lineage>
</organism>
<gene>
    <name type="ordered locus">YFL032W</name>
</gene>
<keyword id="KW-0472">Membrane</keyword>
<keyword id="KW-0812">Transmembrane</keyword>
<keyword id="KW-1133">Transmembrane helix</keyword>
<accession>P43566</accession>
<comment type="subcellular location">
    <subcellularLocation>
        <location evidence="2">Membrane</location>
        <topology evidence="2">Multi-pass membrane protein</topology>
    </subcellularLocation>
</comment>
<comment type="miscellaneous">
    <text evidence="2">Partially overlaps HAC1.</text>
</comment>
<comment type="caution">
    <text evidence="3">Product of a dubious gene prediction unlikely to encode a functional protein. Because of that it is not part of the S.cerevisiae S288c complete/reference proteome set.</text>
</comment>
<dbReference type="EMBL" id="D50617">
    <property type="protein sequence ID" value="BAA09207.1"/>
    <property type="molecule type" value="Genomic_DNA"/>
</dbReference>
<dbReference type="EMBL" id="AY558466">
    <property type="protein sequence ID" value="AAS56792.1"/>
    <property type="molecule type" value="Genomic_DNA"/>
</dbReference>
<dbReference type="PIR" id="S56222">
    <property type="entry name" value="S56222"/>
</dbReference>
<dbReference type="SMR" id="P43566"/>
<dbReference type="PaxDb" id="4932-YFL032W"/>
<dbReference type="EnsemblFungi" id="YFL032W_mRNA">
    <property type="protein sequence ID" value="YFL032W"/>
    <property type="gene ID" value="YFL032W"/>
</dbReference>
<dbReference type="AGR" id="SGD:S000001862"/>
<dbReference type="SGD" id="S000001862">
    <property type="gene designation" value="YFL032W"/>
</dbReference>
<dbReference type="HOGENOM" id="CLU_2225293_0_0_1"/>
<dbReference type="GO" id="GO:0016020">
    <property type="term" value="C:membrane"/>
    <property type="evidence" value="ECO:0007669"/>
    <property type="project" value="UniProtKB-SubCell"/>
</dbReference>
<reference key="1">
    <citation type="journal article" date="1995" name="Nat. Genet.">
        <title>Analysis of the nucleotide sequence of chromosome VI from Saccharomyces cerevisiae.</title>
        <authorList>
            <person name="Murakami Y."/>
            <person name="Naitou M."/>
            <person name="Hagiwara H."/>
            <person name="Shibata T."/>
            <person name="Ozawa M."/>
            <person name="Sasanuma S."/>
            <person name="Sasanuma M."/>
            <person name="Tsuchiya Y."/>
            <person name="Soeda E."/>
            <person name="Yokoyama K."/>
            <person name="Yamazaki M."/>
            <person name="Tashiro H."/>
            <person name="Eki T."/>
        </authorList>
    </citation>
    <scope>NUCLEOTIDE SEQUENCE [LARGE SCALE GENOMIC DNA]</scope>
    <source>
        <strain>ATCC 204508 / S288c</strain>
    </source>
</reference>
<reference key="2">
    <citation type="journal article" date="2014" name="G3 (Bethesda)">
        <title>The reference genome sequence of Saccharomyces cerevisiae: Then and now.</title>
        <authorList>
            <person name="Engel S.R."/>
            <person name="Dietrich F.S."/>
            <person name="Fisk D.G."/>
            <person name="Binkley G."/>
            <person name="Balakrishnan R."/>
            <person name="Costanzo M.C."/>
            <person name="Dwight S.S."/>
            <person name="Hitz B.C."/>
            <person name="Karra K."/>
            <person name="Nash R.S."/>
            <person name="Weng S."/>
            <person name="Wong E.D."/>
            <person name="Lloyd P."/>
            <person name="Skrzypek M.S."/>
            <person name="Miyasato S.R."/>
            <person name="Simison M."/>
            <person name="Cherry J.M."/>
        </authorList>
    </citation>
    <scope>GENOME REANNOTATION</scope>
    <source>
        <strain>ATCC 204508 / S288c</strain>
    </source>
</reference>
<reference key="3">
    <citation type="journal article" date="2007" name="Genome Res.">
        <title>Approaching a complete repository of sequence-verified protein-encoding clones for Saccharomyces cerevisiae.</title>
        <authorList>
            <person name="Hu Y."/>
            <person name="Rolfs A."/>
            <person name="Bhullar B."/>
            <person name="Murthy T.V.S."/>
            <person name="Zhu C."/>
            <person name="Berger M.F."/>
            <person name="Camargo A.A."/>
            <person name="Kelley F."/>
            <person name="McCarron S."/>
            <person name="Jepson D."/>
            <person name="Richardson A."/>
            <person name="Raphael J."/>
            <person name="Moreira D."/>
            <person name="Taycher E."/>
            <person name="Zuo D."/>
            <person name="Mohr S."/>
            <person name="Kane M.F."/>
            <person name="Williamson J."/>
            <person name="Simpson A.J.G."/>
            <person name="Bulyk M.L."/>
            <person name="Harlow E."/>
            <person name="Marsischky G."/>
            <person name="Kolodner R.D."/>
            <person name="LaBaer J."/>
        </authorList>
    </citation>
    <scope>NUCLEOTIDE SEQUENCE [GENOMIC DNA]</scope>
    <source>
        <strain>ATCC 204508 / S288c</strain>
    </source>
</reference>
<name>YFD2_YEAST</name>
<protein>
    <recommendedName>
        <fullName>Putative uncharacterized protein YFL032W</fullName>
    </recommendedName>
</protein>
<evidence type="ECO:0000255" key="1"/>
<evidence type="ECO:0000305" key="2"/>
<evidence type="ECO:0000305" key="3">
    <source>
    </source>
</evidence>
<sequence length="106" mass="12384">MRVVRQSGSALSRAKKSRKYTSYRVMNVVLNTLFSFVLAPYIHYILEEISPQWTTREMNTEICFLAKFSFLLVFLFYLNFQGFNSVSNITTSSSPTYDNNRHYGND</sequence>